<protein>
    <recommendedName>
        <fullName evidence="1">1-deoxy-D-xylulose-5-phosphate synthase</fullName>
        <ecNumber evidence="1">2.2.1.7</ecNumber>
    </recommendedName>
    <alternativeName>
        <fullName evidence="1">1-deoxyxylulose-5-phosphate synthase</fullName>
        <shortName evidence="1">DXP synthase</shortName>
        <shortName evidence="1">DXPS</shortName>
    </alternativeName>
</protein>
<gene>
    <name evidence="1" type="primary">dxs</name>
    <name type="ordered locus">PFL_5510</name>
</gene>
<sequence>MPTTFHEIPRKRPTTPLLDRAQTPDGLRRLGEAELETLADELRLELLYTVGQTGGHFGAGLGVIELTIALHYVFDTPDDRLVWDVGHQAYPHKILTGRREQMASLRQKDGLAAFPRRSESEYDTFGVGHSSTSISAALGMAIAARLQNSERKAIAVIGDGALTAGMAFEALNHAPEVDANMLVILNDNDMSISRNVGGLSNYLAKILSSRTYASMREGSKKVLSRLPGAWEIARRTEEYAKGMLVPGTLFEELGWNYIGPIDGHDLPTLIATLRNMRDLKGPQFLHVVTKKGKGFAPAEVDPIGYHAITKLEPLDAPAAAPKKAGGPKYSGVFGEWLCDMAAADPRLVGITPAMKEGSDLVAFSERFPLRYFDVAIAEQHAVTLAAGMACEGAKPVVAIYSTFLQRGYDQLIHDVAVQNLDVLFAIDRAGLVGEDGPTHAGSFDLSYLRCIPGMLVMTPSDENELRMMLSTGHLYNGPAAVRYPRGTGPNAPIDKSLEPIEIGKGVIRRQGRQVALLVFGVQLAEALQVAEKLDATVVDMRFVKPLDEALVREIASSHELLVTIEENAIMGGAGGAVSEYLARENILKPILHLGLPDAYVEHAKPAQMLAECGLDEAGIEASVRQRLALLGLA</sequence>
<accession>Q4K5A5</accession>
<keyword id="KW-0414">Isoprene biosynthesis</keyword>
<keyword id="KW-0460">Magnesium</keyword>
<keyword id="KW-0479">Metal-binding</keyword>
<keyword id="KW-0784">Thiamine biosynthesis</keyword>
<keyword id="KW-0786">Thiamine pyrophosphate</keyword>
<keyword id="KW-0808">Transferase</keyword>
<feature type="chain" id="PRO_0000256459" description="1-deoxy-D-xylulose-5-phosphate synthase">
    <location>
        <begin position="1"/>
        <end position="633"/>
    </location>
</feature>
<feature type="region of interest" description="Disordered" evidence="2">
    <location>
        <begin position="1"/>
        <end position="22"/>
    </location>
</feature>
<feature type="binding site" evidence="1">
    <location>
        <position position="87"/>
    </location>
    <ligand>
        <name>thiamine diphosphate</name>
        <dbReference type="ChEBI" id="CHEBI:58937"/>
    </ligand>
</feature>
<feature type="binding site" evidence="1">
    <location>
        <begin position="128"/>
        <end position="130"/>
    </location>
    <ligand>
        <name>thiamine diphosphate</name>
        <dbReference type="ChEBI" id="CHEBI:58937"/>
    </ligand>
</feature>
<feature type="binding site" evidence="1">
    <location>
        <position position="159"/>
    </location>
    <ligand>
        <name>Mg(2+)</name>
        <dbReference type="ChEBI" id="CHEBI:18420"/>
    </ligand>
</feature>
<feature type="binding site" evidence="1">
    <location>
        <begin position="160"/>
        <end position="161"/>
    </location>
    <ligand>
        <name>thiamine diphosphate</name>
        <dbReference type="ChEBI" id="CHEBI:58937"/>
    </ligand>
</feature>
<feature type="binding site" evidence="1">
    <location>
        <position position="188"/>
    </location>
    <ligand>
        <name>Mg(2+)</name>
        <dbReference type="ChEBI" id="CHEBI:18420"/>
    </ligand>
</feature>
<feature type="binding site" evidence="1">
    <location>
        <position position="188"/>
    </location>
    <ligand>
        <name>thiamine diphosphate</name>
        <dbReference type="ChEBI" id="CHEBI:58937"/>
    </ligand>
</feature>
<feature type="binding site" evidence="1">
    <location>
        <position position="295"/>
    </location>
    <ligand>
        <name>thiamine diphosphate</name>
        <dbReference type="ChEBI" id="CHEBI:58937"/>
    </ligand>
</feature>
<feature type="binding site" evidence="1">
    <location>
        <position position="378"/>
    </location>
    <ligand>
        <name>thiamine diphosphate</name>
        <dbReference type="ChEBI" id="CHEBI:58937"/>
    </ligand>
</feature>
<name>DXS_PSEF5</name>
<comment type="function">
    <text evidence="1">Catalyzes the acyloin condensation reaction between C atoms 2 and 3 of pyruvate and glyceraldehyde 3-phosphate to yield 1-deoxy-D-xylulose-5-phosphate (DXP).</text>
</comment>
<comment type="catalytic activity">
    <reaction evidence="1">
        <text>D-glyceraldehyde 3-phosphate + pyruvate + H(+) = 1-deoxy-D-xylulose 5-phosphate + CO2</text>
        <dbReference type="Rhea" id="RHEA:12605"/>
        <dbReference type="ChEBI" id="CHEBI:15361"/>
        <dbReference type="ChEBI" id="CHEBI:15378"/>
        <dbReference type="ChEBI" id="CHEBI:16526"/>
        <dbReference type="ChEBI" id="CHEBI:57792"/>
        <dbReference type="ChEBI" id="CHEBI:59776"/>
        <dbReference type="EC" id="2.2.1.7"/>
    </reaction>
</comment>
<comment type="cofactor">
    <cofactor evidence="1">
        <name>Mg(2+)</name>
        <dbReference type="ChEBI" id="CHEBI:18420"/>
    </cofactor>
    <text evidence="1">Binds 1 Mg(2+) ion per subunit.</text>
</comment>
<comment type="cofactor">
    <cofactor evidence="1">
        <name>thiamine diphosphate</name>
        <dbReference type="ChEBI" id="CHEBI:58937"/>
    </cofactor>
    <text evidence="1">Binds 1 thiamine pyrophosphate per subunit.</text>
</comment>
<comment type="pathway">
    <text evidence="1">Metabolic intermediate biosynthesis; 1-deoxy-D-xylulose 5-phosphate biosynthesis; 1-deoxy-D-xylulose 5-phosphate from D-glyceraldehyde 3-phosphate and pyruvate: step 1/1.</text>
</comment>
<comment type="subunit">
    <text evidence="1">Homodimer.</text>
</comment>
<comment type="similarity">
    <text evidence="1">Belongs to the transketolase family. DXPS subfamily.</text>
</comment>
<evidence type="ECO:0000255" key="1">
    <source>
        <dbReference type="HAMAP-Rule" id="MF_00315"/>
    </source>
</evidence>
<evidence type="ECO:0000256" key="2">
    <source>
        <dbReference type="SAM" id="MobiDB-lite"/>
    </source>
</evidence>
<proteinExistence type="inferred from homology"/>
<organism>
    <name type="scientific">Pseudomonas fluorescens (strain ATCC BAA-477 / NRRL B-23932 / Pf-5)</name>
    <dbReference type="NCBI Taxonomy" id="220664"/>
    <lineage>
        <taxon>Bacteria</taxon>
        <taxon>Pseudomonadati</taxon>
        <taxon>Pseudomonadota</taxon>
        <taxon>Gammaproteobacteria</taxon>
        <taxon>Pseudomonadales</taxon>
        <taxon>Pseudomonadaceae</taxon>
        <taxon>Pseudomonas</taxon>
    </lineage>
</organism>
<reference key="1">
    <citation type="journal article" date="2005" name="Nat. Biotechnol.">
        <title>Complete genome sequence of the plant commensal Pseudomonas fluorescens Pf-5.</title>
        <authorList>
            <person name="Paulsen I.T."/>
            <person name="Press C.M."/>
            <person name="Ravel J."/>
            <person name="Kobayashi D.Y."/>
            <person name="Myers G.S.A."/>
            <person name="Mavrodi D.V."/>
            <person name="DeBoy R.T."/>
            <person name="Seshadri R."/>
            <person name="Ren Q."/>
            <person name="Madupu R."/>
            <person name="Dodson R.J."/>
            <person name="Durkin A.S."/>
            <person name="Brinkac L.M."/>
            <person name="Daugherty S.C."/>
            <person name="Sullivan S.A."/>
            <person name="Rosovitz M.J."/>
            <person name="Gwinn M.L."/>
            <person name="Zhou L."/>
            <person name="Schneider D.J."/>
            <person name="Cartinhour S.W."/>
            <person name="Nelson W.C."/>
            <person name="Weidman J."/>
            <person name="Watkins K."/>
            <person name="Tran K."/>
            <person name="Khouri H."/>
            <person name="Pierson E.A."/>
            <person name="Pierson L.S. III"/>
            <person name="Thomashow L.S."/>
            <person name="Loper J.E."/>
        </authorList>
    </citation>
    <scope>NUCLEOTIDE SEQUENCE [LARGE SCALE GENOMIC DNA]</scope>
    <source>
        <strain>ATCC BAA-477 / NRRL B-23932 / Pf-5</strain>
    </source>
</reference>
<dbReference type="EC" id="2.2.1.7" evidence="1"/>
<dbReference type="EMBL" id="CP000076">
    <property type="protein sequence ID" value="AAY94716.1"/>
    <property type="molecule type" value="Genomic_DNA"/>
</dbReference>
<dbReference type="RefSeq" id="WP_011063726.1">
    <property type="nucleotide sequence ID" value="NC_004129.6"/>
</dbReference>
<dbReference type="SMR" id="Q4K5A5"/>
<dbReference type="STRING" id="220664.PFL_5510"/>
<dbReference type="KEGG" id="pfl:PFL_5510"/>
<dbReference type="PATRIC" id="fig|220664.5.peg.5625"/>
<dbReference type="eggNOG" id="COG1154">
    <property type="taxonomic scope" value="Bacteria"/>
</dbReference>
<dbReference type="HOGENOM" id="CLU_009227_1_4_6"/>
<dbReference type="UniPathway" id="UPA00064">
    <property type="reaction ID" value="UER00091"/>
</dbReference>
<dbReference type="Proteomes" id="UP000008540">
    <property type="component" value="Chromosome"/>
</dbReference>
<dbReference type="GO" id="GO:0005829">
    <property type="term" value="C:cytosol"/>
    <property type="evidence" value="ECO:0007669"/>
    <property type="project" value="TreeGrafter"/>
</dbReference>
<dbReference type="GO" id="GO:0008661">
    <property type="term" value="F:1-deoxy-D-xylulose-5-phosphate synthase activity"/>
    <property type="evidence" value="ECO:0007669"/>
    <property type="project" value="UniProtKB-UniRule"/>
</dbReference>
<dbReference type="GO" id="GO:0000287">
    <property type="term" value="F:magnesium ion binding"/>
    <property type="evidence" value="ECO:0007669"/>
    <property type="project" value="UniProtKB-UniRule"/>
</dbReference>
<dbReference type="GO" id="GO:0030976">
    <property type="term" value="F:thiamine pyrophosphate binding"/>
    <property type="evidence" value="ECO:0007669"/>
    <property type="project" value="UniProtKB-UniRule"/>
</dbReference>
<dbReference type="GO" id="GO:0052865">
    <property type="term" value="P:1-deoxy-D-xylulose 5-phosphate biosynthetic process"/>
    <property type="evidence" value="ECO:0007669"/>
    <property type="project" value="UniProtKB-UniPathway"/>
</dbReference>
<dbReference type="GO" id="GO:0019288">
    <property type="term" value="P:isopentenyl diphosphate biosynthetic process, methylerythritol 4-phosphate pathway"/>
    <property type="evidence" value="ECO:0007669"/>
    <property type="project" value="TreeGrafter"/>
</dbReference>
<dbReference type="GO" id="GO:0016114">
    <property type="term" value="P:terpenoid biosynthetic process"/>
    <property type="evidence" value="ECO:0007669"/>
    <property type="project" value="UniProtKB-UniRule"/>
</dbReference>
<dbReference type="GO" id="GO:0009228">
    <property type="term" value="P:thiamine biosynthetic process"/>
    <property type="evidence" value="ECO:0007669"/>
    <property type="project" value="UniProtKB-UniRule"/>
</dbReference>
<dbReference type="CDD" id="cd02007">
    <property type="entry name" value="TPP_DXS"/>
    <property type="match status" value="1"/>
</dbReference>
<dbReference type="CDD" id="cd07033">
    <property type="entry name" value="TPP_PYR_DXS_TK_like"/>
    <property type="match status" value="1"/>
</dbReference>
<dbReference type="FunFam" id="3.40.50.920:FF:000002">
    <property type="entry name" value="1-deoxy-D-xylulose-5-phosphate synthase"/>
    <property type="match status" value="1"/>
</dbReference>
<dbReference type="FunFam" id="3.40.50.970:FF:000005">
    <property type="entry name" value="1-deoxy-D-xylulose-5-phosphate synthase"/>
    <property type="match status" value="1"/>
</dbReference>
<dbReference type="Gene3D" id="3.40.50.920">
    <property type="match status" value="1"/>
</dbReference>
<dbReference type="Gene3D" id="3.40.50.970">
    <property type="match status" value="2"/>
</dbReference>
<dbReference type="HAMAP" id="MF_00315">
    <property type="entry name" value="DXP_synth"/>
    <property type="match status" value="1"/>
</dbReference>
<dbReference type="InterPro" id="IPR005477">
    <property type="entry name" value="Dxylulose-5-P_synthase"/>
</dbReference>
<dbReference type="InterPro" id="IPR029061">
    <property type="entry name" value="THDP-binding"/>
</dbReference>
<dbReference type="InterPro" id="IPR009014">
    <property type="entry name" value="Transketo_C/PFOR_II"/>
</dbReference>
<dbReference type="InterPro" id="IPR005475">
    <property type="entry name" value="Transketolase-like_Pyr-bd"/>
</dbReference>
<dbReference type="InterPro" id="IPR020826">
    <property type="entry name" value="Transketolase_BS"/>
</dbReference>
<dbReference type="InterPro" id="IPR033248">
    <property type="entry name" value="Transketolase_C"/>
</dbReference>
<dbReference type="NCBIfam" id="TIGR00204">
    <property type="entry name" value="dxs"/>
    <property type="match status" value="1"/>
</dbReference>
<dbReference type="NCBIfam" id="NF003933">
    <property type="entry name" value="PRK05444.2-2"/>
    <property type="match status" value="1"/>
</dbReference>
<dbReference type="PANTHER" id="PTHR43322">
    <property type="entry name" value="1-D-DEOXYXYLULOSE 5-PHOSPHATE SYNTHASE-RELATED"/>
    <property type="match status" value="1"/>
</dbReference>
<dbReference type="PANTHER" id="PTHR43322:SF5">
    <property type="entry name" value="1-DEOXY-D-XYLULOSE-5-PHOSPHATE SYNTHASE, CHLOROPLASTIC"/>
    <property type="match status" value="1"/>
</dbReference>
<dbReference type="Pfam" id="PF13292">
    <property type="entry name" value="DXP_synthase_N"/>
    <property type="match status" value="1"/>
</dbReference>
<dbReference type="Pfam" id="PF02779">
    <property type="entry name" value="Transket_pyr"/>
    <property type="match status" value="1"/>
</dbReference>
<dbReference type="Pfam" id="PF02780">
    <property type="entry name" value="Transketolase_C"/>
    <property type="match status" value="1"/>
</dbReference>
<dbReference type="SMART" id="SM00861">
    <property type="entry name" value="Transket_pyr"/>
    <property type="match status" value="1"/>
</dbReference>
<dbReference type="SUPFAM" id="SSF52518">
    <property type="entry name" value="Thiamin diphosphate-binding fold (THDP-binding)"/>
    <property type="match status" value="2"/>
</dbReference>
<dbReference type="SUPFAM" id="SSF52922">
    <property type="entry name" value="TK C-terminal domain-like"/>
    <property type="match status" value="1"/>
</dbReference>
<dbReference type="PROSITE" id="PS00802">
    <property type="entry name" value="TRANSKETOLASE_2"/>
    <property type="match status" value="1"/>
</dbReference>